<protein>
    <recommendedName>
        <fullName>Uncharacterized protein YpfB</fullName>
    </recommendedName>
</protein>
<reference key="1">
    <citation type="journal article" date="1996" name="Microbiology">
        <title>Sequence analysis of the Bacillus subtilis chromosome region between the serA and kdg loci cloned in a yeast artificial chromosome.</title>
        <authorList>
            <person name="Sorokin A.V."/>
            <person name="Azevedo V."/>
            <person name="Zumstein E."/>
            <person name="Galleron N."/>
            <person name="Ehrlich S.D."/>
            <person name="Serror P."/>
        </authorList>
    </citation>
    <scope>NUCLEOTIDE SEQUENCE [GENOMIC DNA]</scope>
    <source>
        <strain>168 / Marburg / ATCC 6051 / DSM 10 / JCM 1465 / NBRC 13719 / NCIMB 3610 / NRRL NRS-744 / VKM B-501</strain>
    </source>
</reference>
<reference key="2">
    <citation type="journal article" date="1997" name="Nature">
        <title>The complete genome sequence of the Gram-positive bacterium Bacillus subtilis.</title>
        <authorList>
            <person name="Kunst F."/>
            <person name="Ogasawara N."/>
            <person name="Moszer I."/>
            <person name="Albertini A.M."/>
            <person name="Alloni G."/>
            <person name="Azevedo V."/>
            <person name="Bertero M.G."/>
            <person name="Bessieres P."/>
            <person name="Bolotin A."/>
            <person name="Borchert S."/>
            <person name="Borriss R."/>
            <person name="Boursier L."/>
            <person name="Brans A."/>
            <person name="Braun M."/>
            <person name="Brignell S.C."/>
            <person name="Bron S."/>
            <person name="Brouillet S."/>
            <person name="Bruschi C.V."/>
            <person name="Caldwell B."/>
            <person name="Capuano V."/>
            <person name="Carter N.M."/>
            <person name="Choi S.-K."/>
            <person name="Codani J.-J."/>
            <person name="Connerton I.F."/>
            <person name="Cummings N.J."/>
            <person name="Daniel R.A."/>
            <person name="Denizot F."/>
            <person name="Devine K.M."/>
            <person name="Duesterhoeft A."/>
            <person name="Ehrlich S.D."/>
            <person name="Emmerson P.T."/>
            <person name="Entian K.-D."/>
            <person name="Errington J."/>
            <person name="Fabret C."/>
            <person name="Ferrari E."/>
            <person name="Foulger D."/>
            <person name="Fritz C."/>
            <person name="Fujita M."/>
            <person name="Fujita Y."/>
            <person name="Fuma S."/>
            <person name="Galizzi A."/>
            <person name="Galleron N."/>
            <person name="Ghim S.-Y."/>
            <person name="Glaser P."/>
            <person name="Goffeau A."/>
            <person name="Golightly E.J."/>
            <person name="Grandi G."/>
            <person name="Guiseppi G."/>
            <person name="Guy B.J."/>
            <person name="Haga K."/>
            <person name="Haiech J."/>
            <person name="Harwood C.R."/>
            <person name="Henaut A."/>
            <person name="Hilbert H."/>
            <person name="Holsappel S."/>
            <person name="Hosono S."/>
            <person name="Hullo M.-F."/>
            <person name="Itaya M."/>
            <person name="Jones L.-M."/>
            <person name="Joris B."/>
            <person name="Karamata D."/>
            <person name="Kasahara Y."/>
            <person name="Klaerr-Blanchard M."/>
            <person name="Klein C."/>
            <person name="Kobayashi Y."/>
            <person name="Koetter P."/>
            <person name="Koningstein G."/>
            <person name="Krogh S."/>
            <person name="Kumano M."/>
            <person name="Kurita K."/>
            <person name="Lapidus A."/>
            <person name="Lardinois S."/>
            <person name="Lauber J."/>
            <person name="Lazarevic V."/>
            <person name="Lee S.-M."/>
            <person name="Levine A."/>
            <person name="Liu H."/>
            <person name="Masuda S."/>
            <person name="Mauel C."/>
            <person name="Medigue C."/>
            <person name="Medina N."/>
            <person name="Mellado R.P."/>
            <person name="Mizuno M."/>
            <person name="Moestl D."/>
            <person name="Nakai S."/>
            <person name="Noback M."/>
            <person name="Noone D."/>
            <person name="O'Reilly M."/>
            <person name="Ogawa K."/>
            <person name="Ogiwara A."/>
            <person name="Oudega B."/>
            <person name="Park S.-H."/>
            <person name="Parro V."/>
            <person name="Pohl T.M."/>
            <person name="Portetelle D."/>
            <person name="Porwollik S."/>
            <person name="Prescott A.M."/>
            <person name="Presecan E."/>
            <person name="Pujic P."/>
            <person name="Purnelle B."/>
            <person name="Rapoport G."/>
            <person name="Rey M."/>
            <person name="Reynolds S."/>
            <person name="Rieger M."/>
            <person name="Rivolta C."/>
            <person name="Rocha E."/>
            <person name="Roche B."/>
            <person name="Rose M."/>
            <person name="Sadaie Y."/>
            <person name="Sato T."/>
            <person name="Scanlan E."/>
            <person name="Schleich S."/>
            <person name="Schroeter R."/>
            <person name="Scoffone F."/>
            <person name="Sekiguchi J."/>
            <person name="Sekowska A."/>
            <person name="Seror S.J."/>
            <person name="Serror P."/>
            <person name="Shin B.-S."/>
            <person name="Soldo B."/>
            <person name="Sorokin A."/>
            <person name="Tacconi E."/>
            <person name="Takagi T."/>
            <person name="Takahashi H."/>
            <person name="Takemaru K."/>
            <person name="Takeuchi M."/>
            <person name="Tamakoshi A."/>
            <person name="Tanaka T."/>
            <person name="Terpstra P."/>
            <person name="Tognoni A."/>
            <person name="Tosato V."/>
            <person name="Uchiyama S."/>
            <person name="Vandenbol M."/>
            <person name="Vannier F."/>
            <person name="Vassarotti A."/>
            <person name="Viari A."/>
            <person name="Wambutt R."/>
            <person name="Wedler E."/>
            <person name="Wedler H."/>
            <person name="Weitzenegger T."/>
            <person name="Winters P."/>
            <person name="Wipat A."/>
            <person name="Yamamoto H."/>
            <person name="Yamane K."/>
            <person name="Yasumoto K."/>
            <person name="Yata K."/>
            <person name="Yoshida K."/>
            <person name="Yoshikawa H.-F."/>
            <person name="Zumstein E."/>
            <person name="Yoshikawa H."/>
            <person name="Danchin A."/>
        </authorList>
    </citation>
    <scope>NUCLEOTIDE SEQUENCE [LARGE SCALE GENOMIC DNA]</scope>
    <source>
        <strain>168</strain>
    </source>
</reference>
<organism>
    <name type="scientific">Bacillus subtilis (strain 168)</name>
    <dbReference type="NCBI Taxonomy" id="224308"/>
    <lineage>
        <taxon>Bacteria</taxon>
        <taxon>Bacillati</taxon>
        <taxon>Bacillota</taxon>
        <taxon>Bacilli</taxon>
        <taxon>Bacillales</taxon>
        <taxon>Bacillaceae</taxon>
        <taxon>Bacillus</taxon>
    </lineage>
</organism>
<keyword id="KW-1185">Reference proteome</keyword>
<gene>
    <name type="primary">ypfB</name>
    <name type="synonym">jofB</name>
    <name type="ordered locus">BSU22900</name>
</gene>
<proteinExistence type="predicted"/>
<dbReference type="EMBL" id="U11687">
    <property type="protein sequence ID" value="AAA85148.1"/>
    <property type="molecule type" value="Genomic_DNA"/>
</dbReference>
<dbReference type="EMBL" id="L47648">
    <property type="protein sequence ID" value="AAC83960.1"/>
    <property type="molecule type" value="Genomic_DNA"/>
</dbReference>
<dbReference type="EMBL" id="AL009126">
    <property type="protein sequence ID" value="CAB14206.1"/>
    <property type="molecule type" value="Genomic_DNA"/>
</dbReference>
<dbReference type="PIR" id="A69935">
    <property type="entry name" value="A69935"/>
</dbReference>
<dbReference type="RefSeq" id="NP_390171.1">
    <property type="nucleotide sequence ID" value="NC_000964.3"/>
</dbReference>
<dbReference type="RefSeq" id="WP_003230553.1">
    <property type="nucleotide sequence ID" value="NZ_OZ025638.1"/>
</dbReference>
<dbReference type="SMR" id="P38492"/>
<dbReference type="FunCoup" id="P38492">
    <property type="interactions" value="6"/>
</dbReference>
<dbReference type="STRING" id="224308.BSU22900"/>
<dbReference type="PaxDb" id="224308-BSU22900"/>
<dbReference type="EnsemblBacteria" id="CAB14206">
    <property type="protein sequence ID" value="CAB14206"/>
    <property type="gene ID" value="BSU_22900"/>
</dbReference>
<dbReference type="GeneID" id="938983"/>
<dbReference type="KEGG" id="bsu:BSU22900"/>
<dbReference type="PATRIC" id="fig|224308.179.peg.2497"/>
<dbReference type="eggNOG" id="ENOG50309RK">
    <property type="taxonomic scope" value="Bacteria"/>
</dbReference>
<dbReference type="InParanoid" id="P38492"/>
<dbReference type="OrthoDB" id="2697487at2"/>
<dbReference type="BioCyc" id="BSUB:BSU22900-MONOMER"/>
<dbReference type="Proteomes" id="UP000001570">
    <property type="component" value="Chromosome"/>
</dbReference>
<dbReference type="InterPro" id="IPR035281">
    <property type="entry name" value="DUF5359"/>
</dbReference>
<dbReference type="Pfam" id="PF17313">
    <property type="entry name" value="DUF5359"/>
    <property type="match status" value="1"/>
</dbReference>
<sequence>MKTFERLLIKLLFIQAIILLGVQFLFHYQHIEPYVSKVIQYEGVDKMEENNRIETFKH</sequence>
<feature type="chain" id="PRO_0000049691" description="Uncharacterized protein YpfB">
    <location>
        <begin position="1"/>
        <end position="58"/>
    </location>
</feature>
<name>YPFB_BACSU</name>
<accession>P38492</accession>